<sequence>MMRKSLCCALLLGISCSALATPVSEKQLAEVVANTITPLMKAQSVPGMAVAVIYQGKPHYYTFGKADIAANKPVTPQTLFELGSISKTFTGVLGGDAIARGEISLDDAVTRYWPQLTGKQWQGIRMLDLATYTAGGLPLQVPDEVTDNASLLRFYQNWQPQWKPGTTRLYANASIGLFGALAVKPSGMPYEQAMTTRVLKPLKLDHTWINVPKAEEAHYAWGYRDGKAVRVSPGMLDAQAYGVKTNVQDMANWVMANMAPENVADASLKQGIALAQSRYWRIGSMYQGLGWEMLNWPVEANTVVEGSDSKVALAPLPVAEVNPPAPPVKASWVHKTGSTGGFGSYVAFIPEKQIGIVMLANTSYPNPARVEAAYHILEALQ</sequence>
<proteinExistence type="evidence at protein level"/>
<keyword id="KW-0002">3D-structure</keyword>
<keyword id="KW-0046">Antibiotic resistance</keyword>
<keyword id="KW-0378">Hydrolase</keyword>
<keyword id="KW-0574">Periplasm</keyword>
<keyword id="KW-0732">Signal</keyword>
<comment type="function">
    <text>This protein is a serine beta-lactamase with a substrate specificity for cephalosporins.</text>
</comment>
<comment type="catalytic activity">
    <reaction evidence="2">
        <text>a beta-lactam + H2O = a substituted beta-amino acid</text>
        <dbReference type="Rhea" id="RHEA:20401"/>
        <dbReference type="ChEBI" id="CHEBI:15377"/>
        <dbReference type="ChEBI" id="CHEBI:35627"/>
        <dbReference type="ChEBI" id="CHEBI:140347"/>
        <dbReference type="EC" id="3.5.2.6"/>
    </reaction>
</comment>
<comment type="subcellular location">
    <subcellularLocation>
        <location evidence="1">Periplasm</location>
    </subcellularLocation>
</comment>
<comment type="miscellaneous">
    <text>The sequence shown is that of strain P99.</text>
</comment>
<comment type="miscellaneous">
    <text evidence="4">The class C beta-lactamase family has a specific amino-acid numbering system known as SANC, for structural alignment-based numbering of class C beta-lactamases, or else the simpler name structural position. A multiple sequence alignment was used to derive a consensus sequence and then the consensus was numbered taking into account insertions and deletions. This allows use of identical numbers, e.g. for active site residues, despite differences in protein length. UniProt always uses natural numbering of residues, hence there appear to be differences in numbering between this entry and some papers.</text>
</comment>
<comment type="similarity">
    <text evidence="3">Belongs to the class-C beta-lactamase family.</text>
</comment>
<organism>
    <name type="scientific">Enterobacter cloacae</name>
    <dbReference type="NCBI Taxonomy" id="550"/>
    <lineage>
        <taxon>Bacteria</taxon>
        <taxon>Pseudomonadati</taxon>
        <taxon>Pseudomonadota</taxon>
        <taxon>Gammaproteobacteria</taxon>
        <taxon>Enterobacterales</taxon>
        <taxon>Enterobacteriaceae</taxon>
        <taxon>Enterobacter</taxon>
        <taxon>Enterobacter cloacae complex</taxon>
    </lineage>
</organism>
<accession>P05364</accession>
<feature type="signal peptide">
    <location>
        <begin position="1"/>
        <end position="20"/>
    </location>
</feature>
<feature type="chain" id="PRO_0000016959" description="Beta-lactamase">
    <location>
        <begin position="21"/>
        <end position="381"/>
    </location>
</feature>
<feature type="active site" description="Acyl-ester intermediate">
    <location>
        <position position="84"/>
    </location>
</feature>
<feature type="active site" description="Proton acceptor">
    <location>
        <position position="170"/>
    </location>
</feature>
<feature type="binding site">
    <location>
        <begin position="335"/>
        <end position="337"/>
    </location>
    <ligand>
        <name>substrate</name>
    </ligand>
</feature>
<feature type="sequence variant" description="In strain: MHN1.">
    <original>R</original>
    <variation>I</variation>
    <location>
        <position position="3"/>
    </location>
</feature>
<feature type="sequence variant" description="In strain: MHN1.">
    <original>I</original>
    <variation>L</variation>
    <location>
        <position position="14"/>
    </location>
</feature>
<feature type="sequence variant" description="In strain: MHN1.">
    <original>T</original>
    <variation>A</variation>
    <location>
        <position position="21"/>
    </location>
</feature>
<feature type="sequence variant" description="In strain: MHN1 and Q980R.">
    <original>I</original>
    <variation>V</variation>
    <location>
        <position position="36"/>
    </location>
</feature>
<feature type="sequence variant" description="In strain: MHN1.">
    <original>P</original>
    <variation>S</variation>
    <location>
        <position position="58"/>
    </location>
</feature>
<feature type="sequence variant" description="In strain: MHN1 and Q980R.">
    <original>A</original>
    <variation>P</variation>
    <location>
        <position position="108"/>
    </location>
</feature>
<feature type="sequence variant" description="In strain: Q980R.">
    <original>L</original>
    <variation>V</variation>
    <location>
        <position position="152"/>
    </location>
</feature>
<feature type="sequence variant" description="In strain: MHN1.">
    <original>N</original>
    <variation>K</variation>
    <location>
        <position position="262"/>
    </location>
</feature>
<feature type="sequence variant" description="In strain: Q980R.">
    <original>A</original>
    <variation>V</variation>
    <location>
        <position position="319"/>
    </location>
</feature>
<feature type="sequence variant" description="In strain: MHN1.">
    <original>T</original>
    <variation>K</variation>
    <location>
        <position position="362"/>
    </location>
</feature>
<feature type="helix" evidence="5">
    <location>
        <begin position="25"/>
        <end position="42"/>
    </location>
</feature>
<feature type="strand" evidence="5">
    <location>
        <begin position="46"/>
        <end position="54"/>
    </location>
</feature>
<feature type="strand" evidence="5">
    <location>
        <begin position="57"/>
        <end position="67"/>
    </location>
</feature>
<feature type="turn" evidence="5">
    <location>
        <begin position="68"/>
        <end position="71"/>
    </location>
</feature>
<feature type="strand" evidence="5">
    <location>
        <begin position="79"/>
        <end position="81"/>
    </location>
</feature>
<feature type="helix" evidence="5">
    <location>
        <begin position="83"/>
        <end position="85"/>
    </location>
</feature>
<feature type="helix" evidence="5">
    <location>
        <begin position="86"/>
        <end position="99"/>
    </location>
</feature>
<feature type="helix" evidence="5">
    <location>
        <begin position="109"/>
        <end position="112"/>
    </location>
</feature>
<feature type="helix" evidence="5">
    <location>
        <begin position="119"/>
        <end position="121"/>
    </location>
</feature>
<feature type="helix" evidence="5">
    <location>
        <begin position="126"/>
        <end position="130"/>
    </location>
</feature>
<feature type="helix" evidence="5">
    <location>
        <begin position="148"/>
        <end position="157"/>
    </location>
</feature>
<feature type="strand" evidence="5">
    <location>
        <begin position="166"/>
        <end position="168"/>
    </location>
</feature>
<feature type="helix" evidence="5">
    <location>
        <begin position="172"/>
        <end position="182"/>
    </location>
</feature>
<feature type="helix" evidence="5">
    <location>
        <begin position="184"/>
        <end position="186"/>
    </location>
</feature>
<feature type="helix" evidence="5">
    <location>
        <begin position="190"/>
        <end position="197"/>
    </location>
</feature>
<feature type="turn" evidence="5">
    <location>
        <begin position="198"/>
        <end position="203"/>
    </location>
</feature>
<feature type="strand" evidence="5">
    <location>
        <begin position="207"/>
        <end position="210"/>
    </location>
</feature>
<feature type="helix" evidence="5">
    <location>
        <begin position="213"/>
        <end position="218"/>
    </location>
</feature>
<feature type="strand" evidence="5">
    <location>
        <begin position="222"/>
        <end position="224"/>
    </location>
</feature>
<feature type="strand" evidence="5">
    <location>
        <begin position="227"/>
        <end position="229"/>
    </location>
</feature>
<feature type="helix" evidence="5">
    <location>
        <begin position="237"/>
        <end position="241"/>
    </location>
</feature>
<feature type="helix" evidence="5">
    <location>
        <begin position="247"/>
        <end position="258"/>
    </location>
</feature>
<feature type="helix" evidence="5">
    <location>
        <begin position="260"/>
        <end position="262"/>
    </location>
</feature>
<feature type="helix" evidence="5">
    <location>
        <begin position="266"/>
        <end position="275"/>
    </location>
</feature>
<feature type="strand" evidence="5">
    <location>
        <begin position="277"/>
        <end position="282"/>
    </location>
</feature>
<feature type="strand" evidence="5">
    <location>
        <begin position="285"/>
        <end position="287"/>
    </location>
</feature>
<feature type="strand" evidence="5">
    <location>
        <begin position="292"/>
        <end position="297"/>
    </location>
</feature>
<feature type="helix" evidence="5">
    <location>
        <begin position="300"/>
        <end position="307"/>
    </location>
</feature>
<feature type="helix" evidence="5">
    <location>
        <begin position="309"/>
        <end position="312"/>
    </location>
</feature>
<feature type="strand" evidence="5">
    <location>
        <begin position="319"/>
        <end position="325"/>
    </location>
</feature>
<feature type="strand" evidence="5">
    <location>
        <begin position="329"/>
        <end position="338"/>
    </location>
</feature>
<feature type="strand" evidence="5">
    <location>
        <begin position="343"/>
        <end position="349"/>
    </location>
</feature>
<feature type="helix" evidence="5">
    <location>
        <begin position="350"/>
        <end position="352"/>
    </location>
</feature>
<feature type="strand" evidence="5">
    <location>
        <begin position="354"/>
        <end position="362"/>
    </location>
</feature>
<feature type="helix" evidence="5">
    <location>
        <begin position="366"/>
        <end position="379"/>
    </location>
</feature>
<dbReference type="EC" id="3.5.2.6"/>
<dbReference type="EMBL" id="X07274">
    <property type="protein sequence ID" value="CAA30257.1"/>
    <property type="molecule type" value="Genomic_DNA"/>
</dbReference>
<dbReference type="EMBL" id="X08082">
    <property type="protein sequence ID" value="CAA30879.1"/>
    <property type="molecule type" value="Genomic_DNA"/>
</dbReference>
<dbReference type="EMBL" id="X08081">
    <property type="protein sequence ID" value="CAA30878.1"/>
    <property type="molecule type" value="Genomic_DNA"/>
</dbReference>
<dbReference type="PIR" id="S00404">
    <property type="entry name" value="PNKBP"/>
</dbReference>
<dbReference type="PIR" id="S00405">
    <property type="entry name" value="PNKBQ"/>
</dbReference>
<dbReference type="PIR" id="S00406">
    <property type="entry name" value="PNKBM"/>
</dbReference>
<dbReference type="PDB" id="1BLS">
    <property type="method" value="X-ray"/>
    <property type="resolution" value="2.30 A"/>
    <property type="chains" value="A/B=21-381"/>
</dbReference>
<dbReference type="PDB" id="1GCE">
    <property type="method" value="X-ray"/>
    <property type="resolution" value="1.80 A"/>
    <property type="chains" value="A=21-381"/>
</dbReference>
<dbReference type="PDB" id="1RGZ">
    <property type="method" value="X-ray"/>
    <property type="resolution" value="1.37 A"/>
    <property type="chains" value="A=22-381"/>
</dbReference>
<dbReference type="PDB" id="1XX2">
    <property type="method" value="X-ray"/>
    <property type="resolution" value="1.88 A"/>
    <property type="chains" value="A/B=21-381"/>
</dbReference>
<dbReference type="PDB" id="1Y54">
    <property type="method" value="X-ray"/>
    <property type="resolution" value="2.10 A"/>
    <property type="chains" value="A=21-381"/>
</dbReference>
<dbReference type="PDB" id="2Q9M">
    <property type="method" value="X-ray"/>
    <property type="resolution" value="2.05 A"/>
    <property type="chains" value="A=22-380"/>
</dbReference>
<dbReference type="PDB" id="2Q9N">
    <property type="method" value="X-ray"/>
    <property type="resolution" value="2.20 A"/>
    <property type="chains" value="A=22-380"/>
</dbReference>
<dbReference type="PDB" id="3S4X">
    <property type="method" value="X-ray"/>
    <property type="resolution" value="1.95 A"/>
    <property type="chains" value="A=21-381"/>
</dbReference>
<dbReference type="PDB" id="4XUX">
    <property type="method" value="X-ray"/>
    <property type="resolution" value="1.75 A"/>
    <property type="chains" value="A=21-381"/>
</dbReference>
<dbReference type="PDB" id="5HAI">
    <property type="method" value="X-ray"/>
    <property type="resolution" value="2.74 A"/>
    <property type="chains" value="A=21-381"/>
</dbReference>
<dbReference type="PDB" id="5XHR">
    <property type="method" value="X-ray"/>
    <property type="resolution" value="1.80 A"/>
    <property type="chains" value="A=21-381"/>
</dbReference>
<dbReference type="PDB" id="7TI1">
    <property type="method" value="X-ray"/>
    <property type="resolution" value="2.00 A"/>
    <property type="chains" value="A=1-381"/>
</dbReference>
<dbReference type="PDBsum" id="1BLS"/>
<dbReference type="PDBsum" id="1GCE"/>
<dbReference type="PDBsum" id="1RGZ"/>
<dbReference type="PDBsum" id="1XX2"/>
<dbReference type="PDBsum" id="1Y54"/>
<dbReference type="PDBsum" id="2Q9M"/>
<dbReference type="PDBsum" id="2Q9N"/>
<dbReference type="PDBsum" id="3S4X"/>
<dbReference type="PDBsum" id="4XUX"/>
<dbReference type="PDBsum" id="5HAI"/>
<dbReference type="PDBsum" id="5XHR"/>
<dbReference type="PDBsum" id="7TI1"/>
<dbReference type="SMR" id="P05364"/>
<dbReference type="BindingDB" id="P05364"/>
<dbReference type="ChEMBL" id="CHEMBL2725"/>
<dbReference type="DrugBank" id="DB08110">
    <property type="generic name" value="(1R,4S,7AS)-1-(1-FORMYLPROP-1-EN-1-YL)-4-METHOXY-2,4,5,6,7,7A-HEXAHYDRO-1H-ISOINDOLE-3-CARBOXYLIC ACID"/>
</dbReference>
<dbReference type="DrugBank" id="DB08109">
    <property type="generic name" value="(1S,4R,7AR)-4-BUTOXY-1-[(1R)-1-FORMYLPROPYL]-2,4,5,6,7,7A-HEXAHYDRO-1H-ISOINDOLE-3-CARBOXYLIC ACID"/>
</dbReference>
<dbReference type="DrugBank" id="DB03970">
    <property type="generic name" value="(7R)-7-(6,7-Dihydro-5H-cyclopenta[d]imidazo[2,1-b][1,3]thiazol-2-yl)-2,7-dihydro-1,4-thiazepine-3,6-dicarboxylic acid"/>
</dbReference>
<dbReference type="DrugBank" id="DB04123">
    <property type="generic name" value="(P-Iodophenylacetylamino)Methylphosphinic Acid"/>
</dbReference>
<dbReference type="DrugBank" id="DB02876">
    <property type="generic name" value="3-(4-carbamoyl-1-carboxy-2-methylsulfonyl-buta-1,3-dienylamino)-indolizine-2-carboxylic acid"/>
</dbReference>
<dbReference type="DrugBank" id="DB02122">
    <property type="generic name" value="4-iodo-acetamido phenylboronic acid"/>
</dbReference>
<dbReference type="DrugBank" id="DB02816">
    <property type="generic name" value="7-(1-Methyl-1,2,3-Triazol-4-Yl)-6-Formyl-2,7-Dihydro-[1,4]Thiazepine-3-Carboxylic Acid, Brl42715, C6-(N1-Methyl-1,2,3-Triazolylmethylene)Penem"/>
</dbReference>
<dbReference type="DrugBank" id="DB09060">
    <property type="generic name" value="Avibactam"/>
</dbReference>
<dbReference type="DrugBank" id="DB12377">
    <property type="generic name" value="Relebactam"/>
</dbReference>
<dbReference type="DrugBank" id="DB12107">
    <property type="generic name" value="Vaborbactam"/>
</dbReference>
<dbReference type="DrugCentral" id="P05364"/>
<dbReference type="CARD" id="ARO:3007961">
    <property type="molecule name" value="ACT-89"/>
    <property type="mechanism identifier" value="ARO:0001004"/>
    <property type="mechanism name" value="antibiotic inactivation"/>
</dbReference>
<dbReference type="MEROPS" id="S12.006"/>
<dbReference type="BRENDA" id="3.5.2.6">
    <property type="organism ID" value="155"/>
</dbReference>
<dbReference type="SABIO-RK" id="P05364"/>
<dbReference type="EvolutionaryTrace" id="P05364"/>
<dbReference type="GO" id="GO:0030288">
    <property type="term" value="C:outer membrane-bounded periplasmic space"/>
    <property type="evidence" value="ECO:0007669"/>
    <property type="project" value="InterPro"/>
</dbReference>
<dbReference type="GO" id="GO:0008800">
    <property type="term" value="F:beta-lactamase activity"/>
    <property type="evidence" value="ECO:0007669"/>
    <property type="project" value="UniProtKB-EC"/>
</dbReference>
<dbReference type="GO" id="GO:0017001">
    <property type="term" value="P:antibiotic catabolic process"/>
    <property type="evidence" value="ECO:0007669"/>
    <property type="project" value="InterPro"/>
</dbReference>
<dbReference type="GO" id="GO:0046677">
    <property type="term" value="P:response to antibiotic"/>
    <property type="evidence" value="ECO:0007669"/>
    <property type="project" value="UniProtKB-KW"/>
</dbReference>
<dbReference type="FunFam" id="3.40.710.10:FF:000012">
    <property type="entry name" value="Beta-lactamase"/>
    <property type="match status" value="1"/>
</dbReference>
<dbReference type="Gene3D" id="3.40.710.10">
    <property type="entry name" value="DD-peptidase/beta-lactamase superfamily"/>
    <property type="match status" value="1"/>
</dbReference>
<dbReference type="InterPro" id="IPR050491">
    <property type="entry name" value="Bact_CellWall_Synth/Modif"/>
</dbReference>
<dbReference type="InterPro" id="IPR001466">
    <property type="entry name" value="Beta-lactam-related"/>
</dbReference>
<dbReference type="InterPro" id="IPR012338">
    <property type="entry name" value="Beta-lactam/transpept-like"/>
</dbReference>
<dbReference type="InterPro" id="IPR001586">
    <property type="entry name" value="Beta-lactam_class-C_AS"/>
</dbReference>
<dbReference type="NCBIfam" id="NF033085">
    <property type="entry name" value="bla_class_C"/>
    <property type="match status" value="1"/>
</dbReference>
<dbReference type="NCBIfam" id="NF000385">
    <property type="entry name" value="blaACT"/>
    <property type="match status" value="1"/>
</dbReference>
<dbReference type="NCBIfam" id="NF012173">
    <property type="entry name" value="CMY2-MIR-ACT-EC"/>
    <property type="match status" value="1"/>
</dbReference>
<dbReference type="PANTHER" id="PTHR46825:SF8">
    <property type="entry name" value="BETA-LACTAMASE-RELATED"/>
    <property type="match status" value="1"/>
</dbReference>
<dbReference type="PANTHER" id="PTHR46825">
    <property type="entry name" value="D-ALANYL-D-ALANINE-CARBOXYPEPTIDASE/ENDOPEPTIDASE AMPH"/>
    <property type="match status" value="1"/>
</dbReference>
<dbReference type="Pfam" id="PF00144">
    <property type="entry name" value="Beta-lactamase"/>
    <property type="match status" value="1"/>
</dbReference>
<dbReference type="SUPFAM" id="SSF56601">
    <property type="entry name" value="beta-lactamase/transpeptidase-like"/>
    <property type="match status" value="1"/>
</dbReference>
<dbReference type="PROSITE" id="PS00336">
    <property type="entry name" value="BETA_LACTAMASE_C"/>
    <property type="match status" value="1"/>
</dbReference>
<evidence type="ECO:0000250" key="1"/>
<evidence type="ECO:0000255" key="2">
    <source>
        <dbReference type="PROSITE-ProRule" id="PRU10102"/>
    </source>
</evidence>
<evidence type="ECO:0000305" key="3"/>
<evidence type="ECO:0000305" key="4">
    <source>
    </source>
</evidence>
<evidence type="ECO:0007829" key="5">
    <source>
        <dbReference type="PDB" id="1RGZ"/>
    </source>
</evidence>
<protein>
    <recommendedName>
        <fullName>Beta-lactamase</fullName>
        <ecNumber>3.5.2.6</ecNumber>
    </recommendedName>
    <alternativeName>
        <fullName>Cephalosporinase</fullName>
    </alternativeName>
</protein>
<gene>
    <name type="primary">ampC</name>
</gene>
<reference key="1">
    <citation type="journal article" date="1988" name="Biochem. J.">
        <title>Sequence and comparative analysis of three Enterobacter cloacae ampC beta-lactamase genes and their products.</title>
        <authorList>
            <person name="Galleni M."/>
            <person name="Lindberg F."/>
            <person name="Normark S."/>
            <person name="Cole S."/>
            <person name="Honore N."/>
            <person name="Joris B."/>
            <person name="Frere J.-M."/>
        </authorList>
    </citation>
    <scope>NUCLEOTIDE SEQUENCE [GENOMIC DNA]</scope>
    <source>
        <strain>MHN1</strain>
        <strain>P99</strain>
        <strain>Q908R</strain>
    </source>
</reference>
<reference key="2">
    <citation type="journal article" date="2020" name="Antimicrob. Agents Chemother.">
        <title>A Standard Numbering Scheme for Class C beta-Lactamases.</title>
        <authorList>
            <person name="Mack A.R."/>
            <person name="Barnes M.D."/>
            <person name="Taracila M.A."/>
            <person name="Hujer A.M."/>
            <person name="Hujer K.M."/>
            <person name="Cabot G."/>
            <person name="Feldgarden M."/>
            <person name="Haft D.H."/>
            <person name="Klimke W."/>
            <person name="van den Akker F."/>
            <person name="Vila A.J."/>
            <person name="Smania A."/>
            <person name="Haider S."/>
            <person name="Papp-Wallace K.M."/>
            <person name="Bradford P.A."/>
            <person name="Rossolini G.M."/>
            <person name="Docquier J.D."/>
            <person name="Frere J.M."/>
            <person name="Galleni M."/>
            <person name="Hanson N.D."/>
            <person name="Oliver A."/>
            <person name="Plesiat P."/>
            <person name="Poirel L."/>
            <person name="Nordmann P."/>
            <person name="Palzkill T.G."/>
            <person name="Jacoby G.A."/>
            <person name="Bush K."/>
            <person name="Bonomo R.A."/>
        </authorList>
    </citation>
    <scope>AMINO ACID NUMBERING SCHEME</scope>
</reference>
<reference key="3">
    <citation type="journal article" date="1993" name="Proc. Natl. Acad. Sci. U.S.A.">
        <title>Evolution of an enzyme activity: crystallographic structure at 2-A resolution of cephalosporinase from the ampC gene of Enterobacter cloacae P99 and comparison with a class A penicillinase.</title>
        <authorList>
            <person name="Lobkovsky E."/>
            <person name="Moews P.C."/>
            <person name="Liu H."/>
            <person name="Zhao H."/>
            <person name="Frere J.-M."/>
            <person name="Knox J.R."/>
        </authorList>
    </citation>
    <scope>X-RAY CRYSTALLOGRAPHY (2.0 ANGSTROMS)</scope>
    <source>
        <strain>P99</strain>
    </source>
</reference>
<reference key="4">
    <citation type="journal article" date="1994" name="Biochemistry">
        <title>Crystallographic structure of a phosphonate derivative of the Enterobacter cloacae P99 cephalosporinase: mechanistic interpretation of a beta-lactamase transition-state analog.</title>
        <authorList>
            <person name="Lobkovsky E."/>
            <person name="Billings E.M."/>
            <person name="Moews P.C."/>
            <person name="Rahil J."/>
            <person name="Pratt R.F."/>
            <person name="Knox J.R."/>
        </authorList>
    </citation>
    <scope>X-RAY CRYSTALLOGRAPHY (2.3 ANGSTROMS)</scope>
    <source>
        <strain>P99</strain>
    </source>
</reference>
<name>AMPC_ENTCL</name>